<gene>
    <name evidence="1" type="primary">rlmH</name>
    <name type="ordered locus">Clos_2775</name>
</gene>
<protein>
    <recommendedName>
        <fullName evidence="1">Ribosomal RNA large subunit methyltransferase H</fullName>
        <ecNumber evidence="1">2.1.1.177</ecNumber>
    </recommendedName>
    <alternativeName>
        <fullName evidence="1">23S rRNA (pseudouridine1915-N3)-methyltransferase</fullName>
    </alternativeName>
    <alternativeName>
        <fullName evidence="1">23S rRNA m3Psi1915 methyltransferase</fullName>
    </alternativeName>
    <alternativeName>
        <fullName evidence="1">rRNA (pseudouridine-N3-)-methyltransferase RlmH</fullName>
    </alternativeName>
</protein>
<comment type="function">
    <text evidence="1">Specifically methylates the pseudouridine at position 1915 (m3Psi1915) in 23S rRNA.</text>
</comment>
<comment type="catalytic activity">
    <reaction evidence="1">
        <text>pseudouridine(1915) in 23S rRNA + S-adenosyl-L-methionine = N(3)-methylpseudouridine(1915) in 23S rRNA + S-adenosyl-L-homocysteine + H(+)</text>
        <dbReference type="Rhea" id="RHEA:42752"/>
        <dbReference type="Rhea" id="RHEA-COMP:10221"/>
        <dbReference type="Rhea" id="RHEA-COMP:10222"/>
        <dbReference type="ChEBI" id="CHEBI:15378"/>
        <dbReference type="ChEBI" id="CHEBI:57856"/>
        <dbReference type="ChEBI" id="CHEBI:59789"/>
        <dbReference type="ChEBI" id="CHEBI:65314"/>
        <dbReference type="ChEBI" id="CHEBI:74486"/>
        <dbReference type="EC" id="2.1.1.177"/>
    </reaction>
</comment>
<comment type="subunit">
    <text evidence="1">Homodimer.</text>
</comment>
<comment type="subcellular location">
    <subcellularLocation>
        <location evidence="1">Cytoplasm</location>
    </subcellularLocation>
</comment>
<comment type="similarity">
    <text evidence="1">Belongs to the RNA methyltransferase RlmH family.</text>
</comment>
<organism>
    <name type="scientific">Alkaliphilus oremlandii (strain OhILAs)</name>
    <name type="common">Clostridium oremlandii (strain OhILAs)</name>
    <dbReference type="NCBI Taxonomy" id="350688"/>
    <lineage>
        <taxon>Bacteria</taxon>
        <taxon>Bacillati</taxon>
        <taxon>Bacillota</taxon>
        <taxon>Clostridia</taxon>
        <taxon>Peptostreptococcales</taxon>
        <taxon>Natronincolaceae</taxon>
        <taxon>Alkaliphilus</taxon>
    </lineage>
</organism>
<keyword id="KW-0963">Cytoplasm</keyword>
<keyword id="KW-0489">Methyltransferase</keyword>
<keyword id="KW-1185">Reference proteome</keyword>
<keyword id="KW-0698">rRNA processing</keyword>
<keyword id="KW-0949">S-adenosyl-L-methionine</keyword>
<keyword id="KW-0808">Transferase</keyword>
<proteinExistence type="inferred from homology"/>
<feature type="chain" id="PRO_1000061754" description="Ribosomal RNA large subunit methyltransferase H">
    <location>
        <begin position="1"/>
        <end position="159"/>
    </location>
</feature>
<feature type="binding site" evidence="1">
    <location>
        <position position="76"/>
    </location>
    <ligand>
        <name>S-adenosyl-L-methionine</name>
        <dbReference type="ChEBI" id="CHEBI:59789"/>
    </ligand>
</feature>
<feature type="binding site" evidence="1">
    <location>
        <position position="108"/>
    </location>
    <ligand>
        <name>S-adenosyl-L-methionine</name>
        <dbReference type="ChEBI" id="CHEBI:59789"/>
    </ligand>
</feature>
<feature type="binding site" evidence="1">
    <location>
        <begin position="127"/>
        <end position="132"/>
    </location>
    <ligand>
        <name>S-adenosyl-L-methionine</name>
        <dbReference type="ChEBI" id="CHEBI:59789"/>
    </ligand>
</feature>
<accession>A8MKH4</accession>
<reference key="1">
    <citation type="submission" date="2007-10" db="EMBL/GenBank/DDBJ databases">
        <title>Complete genome of Alkaliphilus oremlandii OhILAs.</title>
        <authorList>
            <person name="Copeland A."/>
            <person name="Lucas S."/>
            <person name="Lapidus A."/>
            <person name="Barry K."/>
            <person name="Detter J.C."/>
            <person name="Glavina del Rio T."/>
            <person name="Hammon N."/>
            <person name="Israni S."/>
            <person name="Dalin E."/>
            <person name="Tice H."/>
            <person name="Pitluck S."/>
            <person name="Chain P."/>
            <person name="Malfatti S."/>
            <person name="Shin M."/>
            <person name="Vergez L."/>
            <person name="Schmutz J."/>
            <person name="Larimer F."/>
            <person name="Land M."/>
            <person name="Hauser L."/>
            <person name="Kyrpides N."/>
            <person name="Mikhailova N."/>
            <person name="Stolz J.F."/>
            <person name="Dawson A."/>
            <person name="Fisher E."/>
            <person name="Crable B."/>
            <person name="Perera E."/>
            <person name="Lisak J."/>
            <person name="Ranganathan M."/>
            <person name="Basu P."/>
            <person name="Richardson P."/>
        </authorList>
    </citation>
    <scope>NUCLEOTIDE SEQUENCE [LARGE SCALE GENOMIC DNA]</scope>
    <source>
        <strain>OhILAs</strain>
    </source>
</reference>
<sequence length="159" mass="17881">MNITIISVGKLKEKYLKLGIDEYIKRLTRYAKLNIIEIPDEKAPENLSSAEEQIVKNKEGEGILKNIKDGMYVIALDLKGKMLSSEELADKLQSLGVAGNSNIAFIIGGSLGLSEDVLKRADYKLCFSPMTFPHQLMKLILLEQIYRGLRIIKGEPYHK</sequence>
<dbReference type="EC" id="2.1.1.177" evidence="1"/>
<dbReference type="EMBL" id="CP000853">
    <property type="protein sequence ID" value="ABW20306.1"/>
    <property type="molecule type" value="Genomic_DNA"/>
</dbReference>
<dbReference type="RefSeq" id="WP_012160613.1">
    <property type="nucleotide sequence ID" value="NC_009922.1"/>
</dbReference>
<dbReference type="SMR" id="A8MKH4"/>
<dbReference type="STRING" id="350688.Clos_2775"/>
<dbReference type="KEGG" id="aoe:Clos_2775"/>
<dbReference type="eggNOG" id="COG1576">
    <property type="taxonomic scope" value="Bacteria"/>
</dbReference>
<dbReference type="HOGENOM" id="CLU_100552_0_0_9"/>
<dbReference type="OrthoDB" id="9806643at2"/>
<dbReference type="Proteomes" id="UP000000269">
    <property type="component" value="Chromosome"/>
</dbReference>
<dbReference type="GO" id="GO:0005737">
    <property type="term" value="C:cytoplasm"/>
    <property type="evidence" value="ECO:0007669"/>
    <property type="project" value="UniProtKB-SubCell"/>
</dbReference>
<dbReference type="GO" id="GO:0070038">
    <property type="term" value="F:rRNA (pseudouridine-N3-)-methyltransferase activity"/>
    <property type="evidence" value="ECO:0007669"/>
    <property type="project" value="UniProtKB-UniRule"/>
</dbReference>
<dbReference type="CDD" id="cd18081">
    <property type="entry name" value="RlmH-like"/>
    <property type="match status" value="1"/>
</dbReference>
<dbReference type="Gene3D" id="3.40.1280.10">
    <property type="match status" value="1"/>
</dbReference>
<dbReference type="HAMAP" id="MF_00658">
    <property type="entry name" value="23SrRNA_methyltr_H"/>
    <property type="match status" value="1"/>
</dbReference>
<dbReference type="InterPro" id="IPR029028">
    <property type="entry name" value="Alpha/beta_knot_MTases"/>
</dbReference>
<dbReference type="InterPro" id="IPR003742">
    <property type="entry name" value="RlmH-like"/>
</dbReference>
<dbReference type="InterPro" id="IPR029026">
    <property type="entry name" value="tRNA_m1G_MTases_N"/>
</dbReference>
<dbReference type="NCBIfam" id="NF000985">
    <property type="entry name" value="PRK00103.1-3"/>
    <property type="match status" value="1"/>
</dbReference>
<dbReference type="NCBIfam" id="TIGR00246">
    <property type="entry name" value="tRNA_RlmH_YbeA"/>
    <property type="match status" value="1"/>
</dbReference>
<dbReference type="PANTHER" id="PTHR33603">
    <property type="entry name" value="METHYLTRANSFERASE"/>
    <property type="match status" value="1"/>
</dbReference>
<dbReference type="PANTHER" id="PTHR33603:SF1">
    <property type="entry name" value="RIBOSOMAL RNA LARGE SUBUNIT METHYLTRANSFERASE H"/>
    <property type="match status" value="1"/>
</dbReference>
<dbReference type="Pfam" id="PF02590">
    <property type="entry name" value="SPOUT_MTase"/>
    <property type="match status" value="1"/>
</dbReference>
<dbReference type="PIRSF" id="PIRSF004505">
    <property type="entry name" value="MT_bac"/>
    <property type="match status" value="1"/>
</dbReference>
<dbReference type="SUPFAM" id="SSF75217">
    <property type="entry name" value="alpha/beta knot"/>
    <property type="match status" value="1"/>
</dbReference>
<evidence type="ECO:0000255" key="1">
    <source>
        <dbReference type="HAMAP-Rule" id="MF_00658"/>
    </source>
</evidence>
<name>RLMH_ALKOO</name>